<feature type="chain" id="PRO_0000461686" description="Ribosome production factor 2 homolog">
    <location>
        <begin position="1"/>
        <end position="350"/>
    </location>
</feature>
<feature type="domain" description="Brix" evidence="1">
    <location>
        <begin position="28"/>
        <end position="266"/>
    </location>
</feature>
<feature type="region of interest" description="Disordered" evidence="3">
    <location>
        <begin position="192"/>
        <end position="219"/>
    </location>
</feature>
<feature type="region of interest" description="Disordered" evidence="3">
    <location>
        <begin position="301"/>
        <end position="350"/>
    </location>
</feature>
<feature type="compositionally biased region" description="Polar residues" evidence="3">
    <location>
        <begin position="192"/>
        <end position="202"/>
    </location>
</feature>
<feature type="helix" evidence="18">
    <location>
        <begin position="12"/>
        <end position="19"/>
    </location>
</feature>
<feature type="strand" evidence="18">
    <location>
        <begin position="30"/>
        <end position="34"/>
    </location>
</feature>
<feature type="helix" evidence="18">
    <location>
        <begin position="40"/>
        <end position="52"/>
    </location>
</feature>
<feature type="strand" evidence="18">
    <location>
        <begin position="55"/>
        <end position="59"/>
    </location>
</feature>
<feature type="turn" evidence="18">
    <location>
        <begin position="68"/>
        <end position="70"/>
    </location>
</feature>
<feature type="helix" evidence="18">
    <location>
        <begin position="73"/>
        <end position="82"/>
    </location>
</feature>
<feature type="strand" evidence="18">
    <location>
        <begin position="85"/>
        <end position="91"/>
    </location>
</feature>
<feature type="strand" evidence="18">
    <location>
        <begin position="94"/>
        <end position="106"/>
    </location>
</feature>
<feature type="strand" evidence="18">
    <location>
        <begin position="109"/>
        <end position="118"/>
    </location>
</feature>
<feature type="helix" evidence="18">
    <location>
        <begin position="126"/>
        <end position="128"/>
    </location>
</feature>
<feature type="strand" evidence="18">
    <location>
        <begin position="141"/>
        <end position="146"/>
    </location>
</feature>
<feature type="helix" evidence="18">
    <location>
        <begin position="147"/>
        <end position="149"/>
    </location>
</feature>
<feature type="helix" evidence="18">
    <location>
        <begin position="156"/>
        <end position="168"/>
    </location>
</feature>
<feature type="strand" evidence="18">
    <location>
        <begin position="174"/>
        <end position="177"/>
    </location>
</feature>
<feature type="strand" evidence="18">
    <location>
        <begin position="183"/>
        <end position="189"/>
    </location>
</feature>
<feature type="strand" evidence="18">
    <location>
        <begin position="225"/>
        <end position="235"/>
    </location>
</feature>
<feature type="strand" evidence="18">
    <location>
        <begin position="238"/>
        <end position="241"/>
    </location>
</feature>
<feature type="strand" evidence="18">
    <location>
        <begin position="243"/>
        <end position="261"/>
    </location>
</feature>
<feature type="helix" evidence="18">
    <location>
        <begin position="265"/>
        <end position="271"/>
    </location>
</feature>
<protein>
    <recommendedName>
        <fullName evidence="6">Ribosome production factor 2 homolog</fullName>
        <shortName evidence="6">ctRPF2</shortName>
    </recommendedName>
    <alternativeName>
        <fullName evidence="2">Ribosome biogenesis protein RPF2 homolog</fullName>
    </alternativeName>
</protein>
<comment type="function">
    <text evidence="4">Involved in ribosomal large subunit assembly.</text>
</comment>
<comment type="subunit">
    <text evidence="4">Component of a hexameric 5S RNP precursor complex, composed of 5S RNA, RRS1, RPF2, RPL5, RPL11 and SYO1; this complex acts as a precursor for ribosome assembly.</text>
</comment>
<comment type="subcellular location">
    <subcellularLocation>
        <location evidence="2">Nucleus</location>
        <location evidence="2">Nucleolus</location>
    </subcellularLocation>
</comment>
<comment type="similarity">
    <text evidence="5">Belongs to the RPF2 family.</text>
</comment>
<organism>
    <name type="scientific">Chaetomium thermophilum (strain DSM 1495 / CBS 144.50 / IMI 039719)</name>
    <name type="common">Thermochaetoides thermophila</name>
    <dbReference type="NCBI Taxonomy" id="759272"/>
    <lineage>
        <taxon>Eukaryota</taxon>
        <taxon>Fungi</taxon>
        <taxon>Dikarya</taxon>
        <taxon>Ascomycota</taxon>
        <taxon>Pezizomycotina</taxon>
        <taxon>Sordariomycetes</taxon>
        <taxon>Sordariomycetidae</taxon>
        <taxon>Sordariales</taxon>
        <taxon>Chaetomiaceae</taxon>
        <taxon>Thermochaetoides</taxon>
    </lineage>
</organism>
<reference key="1">
    <citation type="journal article" date="2011" name="Cell">
        <title>Insight into structure and assembly of the nuclear pore complex by utilizing the genome of a eukaryotic thermophile.</title>
        <authorList>
            <person name="Amlacher S."/>
            <person name="Sarges P."/>
            <person name="Flemming D."/>
            <person name="van Noort V."/>
            <person name="Kunze R."/>
            <person name="Devos D.P."/>
            <person name="Arumugam M."/>
            <person name="Bork P."/>
            <person name="Hurt E."/>
        </authorList>
    </citation>
    <scope>NUCLEOTIDE SEQUENCE [LARGE SCALE GENOMIC DNA]</scope>
    <source>
        <strain>DSM 1495 / CBS 144.50 / IMI 039719</strain>
    </source>
</reference>
<reference evidence="9" key="2">
    <citation type="journal article" date="2023" name="EMBO Rep.">
        <title>Mechanism of 5S RNP recruitment and helicase-surveilled rRNA maturation during pre-60S biogenesis.</title>
        <authorList>
            <person name="Lau B."/>
            <person name="Huang Z."/>
            <person name="Kellner N."/>
            <person name="Niu S."/>
            <person name="Berninghausen O."/>
            <person name="Beckmann R."/>
            <person name="Hurt E."/>
            <person name="Cheng J."/>
        </authorList>
    </citation>
    <scope>STRUCTURE BY ELECTRON MICROSCOPY (3.10 ANGSTROMS)</scope>
</reference>
<reference evidence="10 11 12 13 14 15 16 17" key="3">
    <citation type="journal article" date="2023" name="EMBO Rep.">
        <title>Structural insights into coordinating 5S RNP rotation with ITS2 pre-RNA processing during ribosome formation.</title>
        <authorList>
            <person name="Thoms M."/>
            <person name="Lau B."/>
            <person name="Cheng J."/>
            <person name="Fromm L."/>
            <person name="Denk T."/>
            <person name="Kellner N."/>
            <person name="Flemming D."/>
            <person name="Fischer P."/>
            <person name="Falquet L."/>
            <person name="Berninghausen O."/>
            <person name="Beckmann R."/>
            <person name="Hurt E."/>
        </authorList>
    </citation>
    <scope>STRUCTURE BY ELECTRON MICROSCOPY (2.12 ANGSTROMS)</scope>
</reference>
<reference evidence="8" key="4">
    <citation type="journal article" date="2023" name="Nat. Struct. Mol. Biol.">
        <title>Structure of nascent 5S RNPs at the crossroad between ribosome assembly and MDM2-p53 pathways.</title>
        <authorList>
            <person name="Castillo Duque de Estrada N.M."/>
            <person name="Thoms M."/>
            <person name="Flemming D."/>
            <person name="Hammaren H.M."/>
            <person name="Buschauer R."/>
            <person name="Ameismeier M."/>
            <person name="Bassler J."/>
            <person name="Beck M."/>
            <person name="Beckmann R."/>
            <person name="Hurt E."/>
        </authorList>
    </citation>
    <scope>STRUCTURE BY ELECTRON MICROSCOPY (3.50 ANGSTROMS) IN COMPLEX WITH RPL11; RPL5; RRS1; SYO1 AND 5S RNA</scope>
    <scope>FUNCTION</scope>
    <scope>SUBUNIT</scope>
</reference>
<sequence>MLRQIKPRNARSKRALEKRAPKIVENPKTCLFLRGTTCSQITQDAMNDLYAMRQVHAKRFHKKNAIHPFEDATSLCFFSEKNDCSLMVFGSSNKKRPHTLTFVRMFDYKVLDMLEFYLDPDTYRSISQFKTSKIPIGMRPMMVFAGTAFESPVPNAFTMAKSMLIDFFRGEPSDKIDVEGLRFVVVVTADEPTSSTSTNNDGENPAPLPGMTDPRSIDPSQKPILRLRVYGIRTKRSGTRLPRVEVEEHGPRMDFRLGRMREPDPAMLKEAMKKAKTPQEERTKKNISMDLLGDKIGRIHMGKTDLSKLQTRKMKGLKRGRDEDEGGEDDRTDVVEAGSGEKKKKKKVKG</sequence>
<keyword id="KW-0002">3D-structure</keyword>
<keyword id="KW-0539">Nucleus</keyword>
<keyword id="KW-1185">Reference proteome</keyword>
<evidence type="ECO:0000255" key="1">
    <source>
        <dbReference type="PROSITE-ProRule" id="PRU00034"/>
    </source>
</evidence>
<evidence type="ECO:0000255" key="2">
    <source>
        <dbReference type="RuleBase" id="RU367086"/>
    </source>
</evidence>
<evidence type="ECO:0000256" key="3">
    <source>
        <dbReference type="SAM" id="MobiDB-lite"/>
    </source>
</evidence>
<evidence type="ECO:0000269" key="4">
    <source>
    </source>
</evidence>
<evidence type="ECO:0000305" key="5"/>
<evidence type="ECO:0000305" key="6">
    <source>
    </source>
</evidence>
<evidence type="ECO:0000312" key="7">
    <source>
        <dbReference type="EMBL" id="EGS18096.1"/>
    </source>
</evidence>
<evidence type="ECO:0007744" key="8">
    <source>
        <dbReference type="PDB" id="7OZS"/>
    </source>
</evidence>
<evidence type="ECO:0007744" key="9">
    <source>
        <dbReference type="PDB" id="8I9R"/>
    </source>
</evidence>
<evidence type="ECO:0007744" key="10">
    <source>
        <dbReference type="PDB" id="8PV1"/>
    </source>
</evidence>
<evidence type="ECO:0007744" key="11">
    <source>
        <dbReference type="PDB" id="8PV2"/>
    </source>
</evidence>
<evidence type="ECO:0007744" key="12">
    <source>
        <dbReference type="PDB" id="8PV3"/>
    </source>
</evidence>
<evidence type="ECO:0007744" key="13">
    <source>
        <dbReference type="PDB" id="8PV4"/>
    </source>
</evidence>
<evidence type="ECO:0007744" key="14">
    <source>
        <dbReference type="PDB" id="8PV5"/>
    </source>
</evidence>
<evidence type="ECO:0007744" key="15">
    <source>
        <dbReference type="PDB" id="8PV7"/>
    </source>
</evidence>
<evidence type="ECO:0007744" key="16">
    <source>
        <dbReference type="PDB" id="8PVK"/>
    </source>
</evidence>
<evidence type="ECO:0007744" key="17">
    <source>
        <dbReference type="PDB" id="8PVL"/>
    </source>
</evidence>
<evidence type="ECO:0007829" key="18">
    <source>
        <dbReference type="PDB" id="7OZS"/>
    </source>
</evidence>
<dbReference type="EMBL" id="GL988046">
    <property type="protein sequence ID" value="EGS18096.1"/>
    <property type="molecule type" value="Genomic_DNA"/>
</dbReference>
<dbReference type="RefSeq" id="XP_006696427.1">
    <property type="nucleotide sequence ID" value="XM_006696364.1"/>
</dbReference>
<dbReference type="PDB" id="7OZS">
    <property type="method" value="EM"/>
    <property type="resolution" value="3.50 A"/>
    <property type="chains" value="C=1-350"/>
</dbReference>
<dbReference type="PDB" id="8I9R">
    <property type="method" value="EM"/>
    <property type="resolution" value="3.10 A"/>
    <property type="chains" value="Cy=1-350"/>
</dbReference>
<dbReference type="PDB" id="8PV1">
    <property type="method" value="EM"/>
    <property type="resolution" value="2.56 A"/>
    <property type="chains" value="Cf=1-350"/>
</dbReference>
<dbReference type="PDB" id="8PV2">
    <property type="method" value="EM"/>
    <property type="resolution" value="2.63 A"/>
    <property type="chains" value="Cf=1-350"/>
</dbReference>
<dbReference type="PDB" id="8PV3">
    <property type="method" value="EM"/>
    <property type="resolution" value="2.80 A"/>
    <property type="chains" value="Cf=1-350"/>
</dbReference>
<dbReference type="PDB" id="8PV4">
    <property type="method" value="EM"/>
    <property type="resolution" value="2.90 A"/>
    <property type="chains" value="Cf=1-350"/>
</dbReference>
<dbReference type="PDB" id="8PV5">
    <property type="method" value="EM"/>
    <property type="resolution" value="2.86 A"/>
    <property type="chains" value="Cf=1-350"/>
</dbReference>
<dbReference type="PDB" id="8PV7">
    <property type="method" value="EM"/>
    <property type="resolution" value="2.12 A"/>
    <property type="chains" value="Cf=1-350"/>
</dbReference>
<dbReference type="PDB" id="8PVK">
    <property type="method" value="EM"/>
    <property type="resolution" value="2.55 A"/>
    <property type="chains" value="Cf=1-350"/>
</dbReference>
<dbReference type="PDB" id="8PVL">
    <property type="method" value="EM"/>
    <property type="resolution" value="2.19 A"/>
    <property type="chains" value="Cf=1-350"/>
</dbReference>
<dbReference type="PDBsum" id="7OZS"/>
<dbReference type="PDBsum" id="8I9R"/>
<dbReference type="PDBsum" id="8PV1"/>
<dbReference type="PDBsum" id="8PV2"/>
<dbReference type="PDBsum" id="8PV3"/>
<dbReference type="PDBsum" id="8PV4"/>
<dbReference type="PDBsum" id="8PV5"/>
<dbReference type="PDBsum" id="8PV7"/>
<dbReference type="PDBsum" id="8PVK"/>
<dbReference type="PDBsum" id="8PVL"/>
<dbReference type="EMDB" id="EMD-13134"/>
<dbReference type="EMDB" id="EMD-17950"/>
<dbReference type="EMDB" id="EMD-17951"/>
<dbReference type="EMDB" id="EMD-17952"/>
<dbReference type="EMDB" id="EMD-17953"/>
<dbReference type="EMDB" id="EMD-17954"/>
<dbReference type="EMDB" id="EMD-17956"/>
<dbReference type="EMDB" id="EMD-17969"/>
<dbReference type="EMDB" id="EMD-17970"/>
<dbReference type="EMDB" id="EMD-35281"/>
<dbReference type="SMR" id="G0SF80"/>
<dbReference type="STRING" id="759272.G0SF80"/>
<dbReference type="KEGG" id="cthr:CTHT_0061110"/>
<dbReference type="eggNOG" id="KOG3031">
    <property type="taxonomic scope" value="Eukaryota"/>
</dbReference>
<dbReference type="HOGENOM" id="CLU_049783_0_0_1"/>
<dbReference type="OMA" id="VGLKPMF"/>
<dbReference type="OrthoDB" id="407658at2759"/>
<dbReference type="Proteomes" id="UP000008066">
    <property type="component" value="Unassembled WGS sequence"/>
</dbReference>
<dbReference type="GO" id="GO:0005730">
    <property type="term" value="C:nucleolus"/>
    <property type="evidence" value="ECO:0007669"/>
    <property type="project" value="UniProtKB-SubCell"/>
</dbReference>
<dbReference type="GO" id="GO:0019843">
    <property type="term" value="F:rRNA binding"/>
    <property type="evidence" value="ECO:0007669"/>
    <property type="project" value="InterPro"/>
</dbReference>
<dbReference type="GO" id="GO:0000463">
    <property type="term" value="P:maturation of LSU-rRNA from tricistronic rRNA transcript (SSU-rRNA, 5.8S rRNA, LSU-rRNA)"/>
    <property type="evidence" value="ECO:0007669"/>
    <property type="project" value="TreeGrafter"/>
</dbReference>
<dbReference type="GO" id="GO:0000027">
    <property type="term" value="P:ribosomal large subunit assembly"/>
    <property type="evidence" value="ECO:0007669"/>
    <property type="project" value="InterPro"/>
</dbReference>
<dbReference type="InterPro" id="IPR007109">
    <property type="entry name" value="Brix"/>
</dbReference>
<dbReference type="InterPro" id="IPR039770">
    <property type="entry name" value="Rpf2"/>
</dbReference>
<dbReference type="PANTHER" id="PTHR12728">
    <property type="entry name" value="BRIX DOMAIN CONTAINING PROTEIN"/>
    <property type="match status" value="1"/>
</dbReference>
<dbReference type="PANTHER" id="PTHR12728:SF0">
    <property type="entry name" value="RIBOSOME PRODUCTION FACTOR 2 HOMOLOG"/>
    <property type="match status" value="1"/>
</dbReference>
<dbReference type="Pfam" id="PF04427">
    <property type="entry name" value="Brix"/>
    <property type="match status" value="1"/>
</dbReference>
<dbReference type="SMART" id="SM00879">
    <property type="entry name" value="Brix"/>
    <property type="match status" value="1"/>
</dbReference>
<dbReference type="PROSITE" id="PS50833">
    <property type="entry name" value="BRIX"/>
    <property type="match status" value="1"/>
</dbReference>
<gene>
    <name evidence="7" type="ORF">HT_0061110</name>
</gene>
<name>RPF2_CHATD</name>
<accession>G0SF80</accession>
<proteinExistence type="evidence at protein level"/>